<dbReference type="EMBL" id="CP001176">
    <property type="protein sequence ID" value="ACK59997.1"/>
    <property type="molecule type" value="Genomic_DNA"/>
</dbReference>
<dbReference type="RefSeq" id="WP_000813896.1">
    <property type="nucleotide sequence ID" value="NZ_VEHB01000002.1"/>
</dbReference>
<dbReference type="SMR" id="B7HCI2"/>
<dbReference type="GeneID" id="93007416"/>
<dbReference type="KEGG" id="bcb:BCB4264_A3812"/>
<dbReference type="HOGENOM" id="CLU_113688_3_0_9"/>
<dbReference type="Proteomes" id="UP000007096">
    <property type="component" value="Chromosome"/>
</dbReference>
<dbReference type="GO" id="GO:0005829">
    <property type="term" value="C:cytosol"/>
    <property type="evidence" value="ECO:0007669"/>
    <property type="project" value="TreeGrafter"/>
</dbReference>
<dbReference type="GO" id="GO:0003723">
    <property type="term" value="F:RNA binding"/>
    <property type="evidence" value="ECO:0007669"/>
    <property type="project" value="UniProtKB-UniRule"/>
</dbReference>
<dbReference type="GO" id="GO:0006355">
    <property type="term" value="P:regulation of DNA-templated transcription"/>
    <property type="evidence" value="ECO:0007669"/>
    <property type="project" value="InterPro"/>
</dbReference>
<dbReference type="GO" id="GO:0043487">
    <property type="term" value="P:regulation of RNA stability"/>
    <property type="evidence" value="ECO:0007669"/>
    <property type="project" value="TreeGrafter"/>
</dbReference>
<dbReference type="GO" id="GO:0045974">
    <property type="term" value="P:regulation of translation, ncRNA-mediated"/>
    <property type="evidence" value="ECO:0007669"/>
    <property type="project" value="TreeGrafter"/>
</dbReference>
<dbReference type="CDD" id="cd01716">
    <property type="entry name" value="Hfq"/>
    <property type="match status" value="1"/>
</dbReference>
<dbReference type="FunFam" id="2.30.30.100:FF:000012">
    <property type="entry name" value="RNA-binding protein Hfq"/>
    <property type="match status" value="1"/>
</dbReference>
<dbReference type="Gene3D" id="2.30.30.100">
    <property type="match status" value="1"/>
</dbReference>
<dbReference type="HAMAP" id="MF_00436">
    <property type="entry name" value="Hfq"/>
    <property type="match status" value="1"/>
</dbReference>
<dbReference type="InterPro" id="IPR005001">
    <property type="entry name" value="Hfq"/>
</dbReference>
<dbReference type="InterPro" id="IPR010920">
    <property type="entry name" value="LSM_dom_sf"/>
</dbReference>
<dbReference type="InterPro" id="IPR047575">
    <property type="entry name" value="Sm"/>
</dbReference>
<dbReference type="NCBIfam" id="TIGR02383">
    <property type="entry name" value="Hfq"/>
    <property type="match status" value="1"/>
</dbReference>
<dbReference type="NCBIfam" id="NF001602">
    <property type="entry name" value="PRK00395.1"/>
    <property type="match status" value="1"/>
</dbReference>
<dbReference type="PANTHER" id="PTHR34772">
    <property type="entry name" value="RNA-BINDING PROTEIN HFQ"/>
    <property type="match status" value="1"/>
</dbReference>
<dbReference type="PANTHER" id="PTHR34772:SF1">
    <property type="entry name" value="RNA-BINDING PROTEIN HFQ"/>
    <property type="match status" value="1"/>
</dbReference>
<dbReference type="Pfam" id="PF17209">
    <property type="entry name" value="Hfq"/>
    <property type="match status" value="1"/>
</dbReference>
<dbReference type="SUPFAM" id="SSF50182">
    <property type="entry name" value="Sm-like ribonucleoproteins"/>
    <property type="match status" value="1"/>
</dbReference>
<dbReference type="PROSITE" id="PS52002">
    <property type="entry name" value="SM"/>
    <property type="match status" value="1"/>
</dbReference>
<protein>
    <recommendedName>
        <fullName evidence="1">RNA-binding protein Hfq</fullName>
    </recommendedName>
</protein>
<keyword id="KW-0694">RNA-binding</keyword>
<keyword id="KW-0346">Stress response</keyword>
<evidence type="ECO:0000255" key="1">
    <source>
        <dbReference type="HAMAP-Rule" id="MF_00436"/>
    </source>
</evidence>
<evidence type="ECO:0000255" key="2">
    <source>
        <dbReference type="PROSITE-ProRule" id="PRU01346"/>
    </source>
</evidence>
<reference key="1">
    <citation type="submission" date="2008-10" db="EMBL/GenBank/DDBJ databases">
        <title>Genome sequence of Bacillus cereus B4264.</title>
        <authorList>
            <person name="Dodson R.J."/>
            <person name="Durkin A.S."/>
            <person name="Rosovitz M.J."/>
            <person name="Rasko D.A."/>
            <person name="Hoffmaster A."/>
            <person name="Ravel J."/>
            <person name="Sutton G."/>
        </authorList>
    </citation>
    <scope>NUCLEOTIDE SEQUENCE [LARGE SCALE GENOMIC DNA]</scope>
    <source>
        <strain>B4264</strain>
    </source>
</reference>
<feature type="chain" id="PRO_1000190304" description="RNA-binding protein Hfq">
    <location>
        <begin position="1"/>
        <end position="74"/>
    </location>
</feature>
<feature type="domain" description="Sm" evidence="2">
    <location>
        <begin position="9"/>
        <end position="69"/>
    </location>
</feature>
<sequence length="74" mass="8646">MKQSINIQDQFLNQLRKENTFVTLYLLNGFQLRGLIKGFDNFTVLLETEGKQQLIYKHAISTFVPQKNVSIELE</sequence>
<name>HFQ_BACC4</name>
<proteinExistence type="inferred from homology"/>
<organism>
    <name type="scientific">Bacillus cereus (strain B4264)</name>
    <dbReference type="NCBI Taxonomy" id="405532"/>
    <lineage>
        <taxon>Bacteria</taxon>
        <taxon>Bacillati</taxon>
        <taxon>Bacillota</taxon>
        <taxon>Bacilli</taxon>
        <taxon>Bacillales</taxon>
        <taxon>Bacillaceae</taxon>
        <taxon>Bacillus</taxon>
        <taxon>Bacillus cereus group</taxon>
    </lineage>
</organism>
<comment type="function">
    <text evidence="1">RNA chaperone that binds small regulatory RNA (sRNAs) and mRNAs to facilitate mRNA translational regulation in response to envelope stress, environmental stress and changes in metabolite concentrations. Also binds with high specificity to tRNAs.</text>
</comment>
<comment type="subunit">
    <text evidence="1">Homohexamer.</text>
</comment>
<comment type="similarity">
    <text evidence="1">Belongs to the Hfq family.</text>
</comment>
<gene>
    <name evidence="1" type="primary">hfq</name>
    <name type="ordered locus">BCB4264_A3812</name>
</gene>
<accession>B7HCI2</accession>